<feature type="signal peptide" evidence="2">
    <location>
        <begin position="1"/>
        <end position="26"/>
    </location>
</feature>
<feature type="chain" id="PRO_0000011952" description="Hevamine-A">
    <location>
        <begin position="27"/>
        <end position="299"/>
    </location>
</feature>
<feature type="propeptide" id="PRO_0000011953" description="Removed in mature form">
    <location>
        <begin position="300"/>
        <end position="311"/>
    </location>
</feature>
<feature type="domain" description="GH18" evidence="1">
    <location>
        <begin position="27"/>
        <end position="302"/>
    </location>
</feature>
<feature type="active site" description="Proton donor" evidence="1">
    <location>
        <position position="153"/>
    </location>
</feature>
<feature type="disulfide bond" evidence="3 5">
    <location>
        <begin position="46"/>
        <end position="93"/>
    </location>
</feature>
<feature type="disulfide bond" evidence="3 5">
    <location>
        <begin position="76"/>
        <end position="83"/>
    </location>
</feature>
<feature type="disulfide bond" evidence="3 5">
    <location>
        <begin position="185"/>
        <end position="214"/>
    </location>
</feature>
<feature type="sequence variant" description="In hevamine-B.">
    <original>L</original>
    <variation>R</variation>
    <location>
        <position position="296"/>
    </location>
</feature>
<feature type="sequence variant" description="In hevamine-B.">
    <original>E</original>
    <variation>K</variation>
    <location>
        <position position="306"/>
    </location>
</feature>
<feature type="strand" evidence="7">
    <location>
        <begin position="28"/>
        <end position="35"/>
    </location>
</feature>
<feature type="helix" evidence="7">
    <location>
        <begin position="37"/>
        <end position="39"/>
    </location>
</feature>
<feature type="helix" evidence="7">
    <location>
        <begin position="42"/>
        <end position="47"/>
    </location>
</feature>
<feature type="strand" evidence="7">
    <location>
        <begin position="52"/>
        <end position="61"/>
    </location>
</feature>
<feature type="strand" evidence="6">
    <location>
        <begin position="66"/>
        <end position="69"/>
    </location>
</feature>
<feature type="helix" evidence="7">
    <location>
        <begin position="73"/>
        <end position="75"/>
    </location>
</feature>
<feature type="helix" evidence="7">
    <location>
        <begin position="79"/>
        <end position="81"/>
    </location>
</feature>
<feature type="turn" evidence="7">
    <location>
        <begin position="82"/>
        <end position="85"/>
    </location>
</feature>
<feature type="helix" evidence="7">
    <location>
        <begin position="86"/>
        <end position="95"/>
    </location>
</feature>
<feature type="strand" evidence="7">
    <location>
        <begin position="99"/>
        <end position="105"/>
    </location>
</feature>
<feature type="helix" evidence="7">
    <location>
        <begin position="116"/>
        <end position="129"/>
    </location>
</feature>
<feature type="strand" evidence="7">
    <location>
        <begin position="131"/>
        <end position="133"/>
    </location>
</feature>
<feature type="strand" evidence="7">
    <location>
        <begin position="146"/>
        <end position="151"/>
    </location>
</feature>
<feature type="helix" evidence="7">
    <location>
        <begin position="160"/>
        <end position="169"/>
    </location>
</feature>
<feature type="helix" evidence="7">
    <location>
        <begin position="170"/>
        <end position="173"/>
    </location>
</feature>
<feature type="strand" evidence="7">
    <location>
        <begin position="178"/>
        <end position="181"/>
    </location>
</feature>
<feature type="strand" evidence="7">
    <location>
        <begin position="184"/>
        <end position="188"/>
    </location>
</feature>
<feature type="turn" evidence="7">
    <location>
        <begin position="190"/>
        <end position="192"/>
    </location>
</feature>
<feature type="helix" evidence="7">
    <location>
        <begin position="193"/>
        <end position="197"/>
    </location>
</feature>
<feature type="strand" evidence="7">
    <location>
        <begin position="202"/>
        <end position="207"/>
    </location>
</feature>
<feature type="helix" evidence="7">
    <location>
        <begin position="212"/>
        <end position="214"/>
    </location>
</feature>
<feature type="helix" evidence="7">
    <location>
        <begin position="222"/>
        <end position="234"/>
    </location>
</feature>
<feature type="strand" evidence="7">
    <location>
        <begin position="238"/>
        <end position="247"/>
    </location>
</feature>
<feature type="helix" evidence="7">
    <location>
        <begin position="248"/>
        <end position="250"/>
    </location>
</feature>
<feature type="strand" evidence="7">
    <location>
        <begin position="251"/>
        <end position="253"/>
    </location>
</feature>
<feature type="helix" evidence="7">
    <location>
        <begin position="258"/>
        <end position="263"/>
    </location>
</feature>
<feature type="helix" evidence="7">
    <location>
        <begin position="266"/>
        <end position="269"/>
    </location>
</feature>
<feature type="strand" evidence="7">
    <location>
        <begin position="275"/>
        <end position="281"/>
    </location>
</feature>
<feature type="helix" evidence="7">
    <location>
        <begin position="283"/>
        <end position="289"/>
    </location>
</feature>
<feature type="helix" evidence="7">
    <location>
        <begin position="291"/>
        <end position="295"/>
    </location>
</feature>
<feature type="helix" evidence="7">
    <location>
        <begin position="296"/>
        <end position="298"/>
    </location>
</feature>
<comment type="function">
    <text>Bifunctional enzyme with lysozyme / chitinase activity. May have a role in plugging the latex vessel and cessation of latex flow.</text>
</comment>
<comment type="catalytic activity">
    <reaction>
        <text>Random endo-hydrolysis of N-acetyl-beta-D-glucosaminide (1-&gt;4)-beta-linkages in chitin and chitodextrins.</text>
        <dbReference type="EC" id="3.2.1.14"/>
    </reaction>
</comment>
<comment type="catalytic activity">
    <reaction>
        <text>Hydrolysis of (1-&gt;4)-beta-linkages between N-acetylmuramic acid and N-acetyl-D-glucosamine residues in a peptidoglycan and between N-acetyl-D-glucosamine residues in chitodextrins.</text>
        <dbReference type="EC" id="3.2.1.17"/>
    </reaction>
</comment>
<comment type="subcellular location">
    <subcellularLocation>
        <location>Vacuole</location>
    </subcellularLocation>
    <text>In the lutoids (vacuoles) from rubber latex.</text>
</comment>
<comment type="miscellaneous">
    <text>Two components of hevamine have been isolated: hevamine A (shown here), the most abundant, and hevamine B.</text>
</comment>
<comment type="similarity">
    <text evidence="4">Belongs to the glycosyl hydrolase 18 family. Chitinase class II subfamily.</text>
</comment>
<reference key="1">
    <citation type="submission" date="1998-08" db="EMBL/GenBank/DDBJ databases">
        <authorList>
            <person name="Bokma E."/>
        </authorList>
    </citation>
    <scope>NUCLEOTIDE SEQUENCE [GENOMIC DNA]</scope>
    <source>
        <strain>cv. RRIM</strain>
        <tissue>Latex</tissue>
        <tissue>Leaf</tissue>
    </source>
</reference>
<reference key="2">
    <citation type="submission" date="2006-12" db="EMBL/GenBank/DDBJ databases">
        <title>Cloning and sequencing of chitinase gene in Hevea brasiliensis.</title>
        <authorList>
            <person name="Philip S."/>
            <person name="Abraham T."/>
            <person name="Joseph A."/>
            <person name="Zacharia C.A."/>
            <person name="Jacob C.K."/>
        </authorList>
    </citation>
    <scope>NUCLEOTIDE SEQUENCE [MRNA]</scope>
</reference>
<reference key="3">
    <citation type="journal article" date="1991" name="Eur. J. Biochem.">
        <title>The primary structure of hevamine, an enzyme with lysozyme/chitinase activity from Hevea brasiliensis latex.</title>
        <authorList>
            <person name="Jekel P.A."/>
            <person name="Hartmann J.B.H."/>
            <person name="Beintema J.J."/>
        </authorList>
    </citation>
    <scope>PROTEIN SEQUENCE OF 27-299</scope>
    <source>
        <tissue>Latex</tissue>
    </source>
</reference>
<reference key="4">
    <citation type="journal article" date="1994" name="Structure">
        <title>Crystal structures of hevamine, a plant defence protein with chitinase and lysozyme activity, and its complex with an inhibitor.</title>
        <authorList>
            <person name="van Scheltinga A.C.T."/>
            <person name="Kalk K.H."/>
            <person name="Beintema J.J."/>
            <person name="Dijkstra B.W."/>
        </authorList>
    </citation>
    <scope>X-RAY CRYSTALLOGRAPHY (2.2 ANGSTROMS)</scope>
</reference>
<reference key="5">
    <citation type="journal article" date="1995" name="Biochemistry">
        <title>Stereochemistry of chitin hydrolysis by a plant chitinase/lysozyme and X-ray structure of a complex with allosamidin: evidence for substrate assisted catalysis.</title>
        <authorList>
            <person name="van Scheltinga A.C.T."/>
            <person name="Armand S."/>
            <person name="Kalk K.H."/>
            <person name="Isogai A."/>
            <person name="Henrissat B."/>
            <person name="Dijkstra B.W."/>
        </authorList>
    </citation>
    <scope>X-RAY CRYSTALLOGRAPHY (1.85 ANGSTROMS)</scope>
</reference>
<reference key="6">
    <citation type="journal article" date="1996" name="J. Mol. Biol.">
        <title>The 1.8-A resolution structure of hevamine, a plant chitinase/lysozyme, and analysis of the conserved sequence and structure motifs of glycosyl hydrolase family 18.</title>
        <authorList>
            <person name="van Scheltinga A.C.T."/>
            <person name="Hennig M."/>
            <person name="Dijkstra B.W."/>
        </authorList>
    </citation>
    <scope>X-RAY CRYSTALLOGRAPHY (1.8 ANGSTROMS)</scope>
    <scope>DISULFIDE BONDS</scope>
</reference>
<name>CHLY_HEVBR</name>
<sequence>MAKRTQAILLLLLAISLIMSSSHVDGGGIAIYWGQNGNEGTLTQTCSTRKYSYVNIAFLNKFGNGQTPQINLAGHCNPAAGGCTIVSNGIRSCQIQGIKVMLSLGGGIGSYTLASQADAKNVADYLWNNFLGGKSSSRPLGDAVLDGIDFDIEHGSTLYWDDLARYLSAYSKQGKKVYLTAAPQCPFPDRYLGTALNTGLFDYVWVQFYNNPPCQYSSGNINNIINSWNRWTTSINAGKIFLGLPAAPEAAGSGYVPPDVLISRILPEIKKSPKYGGVMLWSKFYDDKNGYSSSILDSVLFLHSEECMTVL</sequence>
<dbReference type="EC" id="3.2.1.14"/>
<dbReference type="EC" id="3.2.1.17"/>
<dbReference type="EMBL" id="AJ007701">
    <property type="protein sequence ID" value="CAA07608.1"/>
    <property type="molecule type" value="Genomic_DNA"/>
</dbReference>
<dbReference type="EMBL" id="DQ873889">
    <property type="protein sequence ID" value="ABI32402.2"/>
    <property type="molecule type" value="mRNA"/>
</dbReference>
<dbReference type="EMBL" id="AJ010397">
    <property type="protein sequence ID" value="CAA09110.1"/>
    <property type="molecule type" value="mRNA"/>
</dbReference>
<dbReference type="PIR" id="T10761">
    <property type="entry name" value="T10761"/>
</dbReference>
<dbReference type="PDB" id="1HVQ">
    <property type="method" value="X-ray"/>
    <property type="resolution" value="2.20 A"/>
    <property type="chains" value="A=27-299"/>
</dbReference>
<dbReference type="PDB" id="1KQY">
    <property type="method" value="X-ray"/>
    <property type="resolution" value="1.92 A"/>
    <property type="chains" value="A=27-299"/>
</dbReference>
<dbReference type="PDB" id="1KQZ">
    <property type="method" value="X-ray"/>
    <property type="resolution" value="1.92 A"/>
    <property type="chains" value="A=27-299"/>
</dbReference>
<dbReference type="PDB" id="1KR0">
    <property type="method" value="X-ray"/>
    <property type="resolution" value="1.92 A"/>
    <property type="chains" value="A=27-299"/>
</dbReference>
<dbReference type="PDB" id="1KR1">
    <property type="method" value="X-ray"/>
    <property type="resolution" value="2.00 A"/>
    <property type="chains" value="A=27-299"/>
</dbReference>
<dbReference type="PDB" id="1LLO">
    <property type="method" value="X-ray"/>
    <property type="resolution" value="1.85 A"/>
    <property type="chains" value="A=27-299"/>
</dbReference>
<dbReference type="PDB" id="2HVM">
    <property type="method" value="X-ray"/>
    <property type="resolution" value="1.80 A"/>
    <property type="chains" value="A=27-299"/>
</dbReference>
<dbReference type="PDBsum" id="1HVQ"/>
<dbReference type="PDBsum" id="1KQY"/>
<dbReference type="PDBsum" id="1KQZ"/>
<dbReference type="PDBsum" id="1KR0"/>
<dbReference type="PDBsum" id="1KR1"/>
<dbReference type="PDBsum" id="1LLO"/>
<dbReference type="PDBsum" id="2HVM"/>
<dbReference type="SMR" id="P23472"/>
<dbReference type="Allergome" id="1531">
    <property type="allergen name" value="Hev b 14"/>
</dbReference>
<dbReference type="CAZy" id="GH18">
    <property type="family name" value="Glycoside Hydrolase Family 18"/>
</dbReference>
<dbReference type="EvolutionaryTrace" id="P23472"/>
<dbReference type="GO" id="GO:0005576">
    <property type="term" value="C:extracellular region"/>
    <property type="evidence" value="ECO:0007669"/>
    <property type="project" value="TreeGrafter"/>
</dbReference>
<dbReference type="GO" id="GO:0005773">
    <property type="term" value="C:vacuole"/>
    <property type="evidence" value="ECO:0007669"/>
    <property type="project" value="UniProtKB-SubCell"/>
</dbReference>
<dbReference type="GO" id="GO:0004568">
    <property type="term" value="F:chitinase activity"/>
    <property type="evidence" value="ECO:0000314"/>
    <property type="project" value="UniProtKB"/>
</dbReference>
<dbReference type="GO" id="GO:0008843">
    <property type="term" value="F:endochitinase activity"/>
    <property type="evidence" value="ECO:0007669"/>
    <property type="project" value="UniProtKB-EC"/>
</dbReference>
<dbReference type="GO" id="GO:0003796">
    <property type="term" value="F:lysozyme activity"/>
    <property type="evidence" value="ECO:0007669"/>
    <property type="project" value="UniProtKB-EC"/>
</dbReference>
<dbReference type="GO" id="GO:0006032">
    <property type="term" value="P:chitin catabolic process"/>
    <property type="evidence" value="ECO:0000314"/>
    <property type="project" value="UniProtKB"/>
</dbReference>
<dbReference type="GO" id="GO:0000272">
    <property type="term" value="P:polysaccharide catabolic process"/>
    <property type="evidence" value="ECO:0007669"/>
    <property type="project" value="UniProtKB-KW"/>
</dbReference>
<dbReference type="CDD" id="cd02877">
    <property type="entry name" value="GH18_hevamine_XipI_class_III"/>
    <property type="match status" value="1"/>
</dbReference>
<dbReference type="FunFam" id="3.20.20.80:FF:000015">
    <property type="entry name" value="Acidic endochitinase SE2"/>
    <property type="match status" value="1"/>
</dbReference>
<dbReference type="Gene3D" id="3.20.20.80">
    <property type="entry name" value="Glycosidases"/>
    <property type="match status" value="1"/>
</dbReference>
<dbReference type="InterPro" id="IPR045321">
    <property type="entry name" value="Cts1-like"/>
</dbReference>
<dbReference type="InterPro" id="IPR001223">
    <property type="entry name" value="Glyco_hydro18_cat"/>
</dbReference>
<dbReference type="InterPro" id="IPR001579">
    <property type="entry name" value="Glyco_hydro_18_chit_AS"/>
</dbReference>
<dbReference type="InterPro" id="IPR017853">
    <property type="entry name" value="Glycoside_hydrolase_SF"/>
</dbReference>
<dbReference type="InterPro" id="IPR050542">
    <property type="entry name" value="Glycosyl_Hydrlase18_Chitinase"/>
</dbReference>
<dbReference type="PANTHER" id="PTHR45708:SF21">
    <property type="entry name" value="ACIDIC ENDOCHITINASE"/>
    <property type="match status" value="1"/>
</dbReference>
<dbReference type="PANTHER" id="PTHR45708">
    <property type="entry name" value="ENDOCHITINASE"/>
    <property type="match status" value="1"/>
</dbReference>
<dbReference type="Pfam" id="PF00704">
    <property type="entry name" value="Glyco_hydro_18"/>
    <property type="match status" value="1"/>
</dbReference>
<dbReference type="SUPFAM" id="SSF51445">
    <property type="entry name" value="(Trans)glycosidases"/>
    <property type="match status" value="1"/>
</dbReference>
<dbReference type="PROSITE" id="PS01095">
    <property type="entry name" value="GH18_1"/>
    <property type="match status" value="1"/>
</dbReference>
<dbReference type="PROSITE" id="PS51910">
    <property type="entry name" value="GH18_2"/>
    <property type="match status" value="1"/>
</dbReference>
<keyword id="KW-0002">3D-structure</keyword>
<keyword id="KW-0119">Carbohydrate metabolism</keyword>
<keyword id="KW-0146">Chitin degradation</keyword>
<keyword id="KW-0903">Direct protein sequencing</keyword>
<keyword id="KW-1015">Disulfide bond</keyword>
<keyword id="KW-0326">Glycosidase</keyword>
<keyword id="KW-0378">Hydrolase</keyword>
<keyword id="KW-0511">Multifunctional enzyme</keyword>
<keyword id="KW-0624">Polysaccharide degradation</keyword>
<keyword id="KW-0732">Signal</keyword>
<keyword id="KW-0926">Vacuole</keyword>
<organism>
    <name type="scientific">Hevea brasiliensis</name>
    <name type="common">Para rubber tree</name>
    <name type="synonym">Siphonia brasiliensis</name>
    <dbReference type="NCBI Taxonomy" id="3981"/>
    <lineage>
        <taxon>Eukaryota</taxon>
        <taxon>Viridiplantae</taxon>
        <taxon>Streptophyta</taxon>
        <taxon>Embryophyta</taxon>
        <taxon>Tracheophyta</taxon>
        <taxon>Spermatophyta</taxon>
        <taxon>Magnoliopsida</taxon>
        <taxon>eudicotyledons</taxon>
        <taxon>Gunneridae</taxon>
        <taxon>Pentapetalae</taxon>
        <taxon>rosids</taxon>
        <taxon>fabids</taxon>
        <taxon>Malpighiales</taxon>
        <taxon>Euphorbiaceae</taxon>
        <taxon>Crotonoideae</taxon>
        <taxon>Micrandreae</taxon>
        <taxon>Hevea</taxon>
    </lineage>
</organism>
<evidence type="ECO:0000255" key="1">
    <source>
        <dbReference type="PROSITE-ProRule" id="PRU01258"/>
    </source>
</evidence>
<evidence type="ECO:0000269" key="2">
    <source>
    </source>
</evidence>
<evidence type="ECO:0000269" key="3">
    <source>
    </source>
</evidence>
<evidence type="ECO:0000305" key="4"/>
<evidence type="ECO:0007744" key="5">
    <source>
        <dbReference type="PDB" id="2HVM"/>
    </source>
</evidence>
<evidence type="ECO:0007829" key="6">
    <source>
        <dbReference type="PDB" id="1KQY"/>
    </source>
</evidence>
<evidence type="ECO:0007829" key="7">
    <source>
        <dbReference type="PDB" id="2HVM"/>
    </source>
</evidence>
<protein>
    <recommendedName>
        <fullName>Hevamine-A</fullName>
    </recommendedName>
    <domain>
        <recommendedName>
            <fullName>Chitinase</fullName>
            <ecNumber>3.2.1.14</ecNumber>
        </recommendedName>
    </domain>
    <domain>
        <recommendedName>
            <fullName>Lysozyme</fullName>
            <ecNumber>3.2.1.17</ecNumber>
        </recommendedName>
    </domain>
</protein>
<accession>P23472</accession>
<accession>Q0GBZ6</accession>
<proteinExistence type="evidence at protein level"/>